<gene>
    <name type="primary">SERPINA9</name>
    <name type="synonym">GCET1</name>
    <name type="synonym">SERPINA11</name>
    <name type="ORF">UNQ692/PRO1337</name>
</gene>
<keyword id="KW-0025">Alternative splicing</keyword>
<keyword id="KW-0963">Cytoplasm</keyword>
<keyword id="KW-0325">Glycoprotein</keyword>
<keyword id="KW-0472">Membrane</keyword>
<keyword id="KW-0646">Protease inhibitor</keyword>
<keyword id="KW-1267">Proteomics identification</keyword>
<keyword id="KW-1185">Reference proteome</keyword>
<keyword id="KW-0964">Secreted</keyword>
<keyword id="KW-0722">Serine protease inhibitor</keyword>
<keyword id="KW-0732">Signal</keyword>
<evidence type="ECO:0000255" key="1"/>
<evidence type="ECO:0000269" key="2">
    <source>
    </source>
</evidence>
<evidence type="ECO:0000269" key="3">
    <source>
    </source>
</evidence>
<evidence type="ECO:0000269" key="4">
    <source>
    </source>
</evidence>
<evidence type="ECO:0000269" key="5">
    <source>
    </source>
</evidence>
<evidence type="ECO:0000269" key="6">
    <source>
    </source>
</evidence>
<evidence type="ECO:0000303" key="7">
    <source>
    </source>
</evidence>
<evidence type="ECO:0000303" key="8">
    <source>
    </source>
</evidence>
<evidence type="ECO:0000303" key="9">
    <source>
    </source>
</evidence>
<evidence type="ECO:0000303" key="10">
    <source ref="2"/>
</evidence>
<evidence type="ECO:0000305" key="11"/>
<comment type="function">
    <text evidence="4">Protease inhibitor that inhibits trypsin and trypsin-like serine proteases (in vitro). Inhibits plasmin and thrombin with lower efficiency (in vitro).</text>
</comment>
<comment type="subcellular location">
    <molecule>Isoform 1</molecule>
    <subcellularLocation>
        <location>Secreted</location>
    </subcellularLocation>
</comment>
<comment type="subcellular location">
    <molecule>Isoform 2</molecule>
    <subcellularLocation>
        <location evidence="11">Cytoplasm</location>
    </subcellularLocation>
</comment>
<comment type="subcellular location">
    <molecule>Isoform 3</molecule>
    <subcellularLocation>
        <location evidence="11">Cytoplasm</location>
    </subcellularLocation>
</comment>
<comment type="subcellular location">
    <molecule>Isoform 4</molecule>
    <subcellularLocation>
        <location evidence="11">Cytoplasm</location>
    </subcellularLocation>
</comment>
<comment type="subcellular location">
    <molecule>Isoform 5</molecule>
    <subcellularLocation>
        <location evidence="11">Cytoplasm</location>
    </subcellularLocation>
</comment>
<comment type="subcellular location">
    <molecule>Isoform 6</molecule>
    <subcellularLocation>
        <location evidence="11">Cytoplasm</location>
    </subcellularLocation>
</comment>
<comment type="subcellular location">
    <molecule>Isoform 7</molecule>
    <subcellularLocation>
        <location evidence="11">Membrane</location>
        <topology evidence="11">Single-pass type II membrane protein</topology>
    </subcellularLocation>
</comment>
<comment type="alternative products">
    <event type="alternative splicing"/>
    <isoform>
        <id>Q86WD7-1</id>
        <name>1</name>
        <name>A</name>
        <sequence type="displayed"/>
    </isoform>
    <isoform>
        <id>Q86WD7-2</id>
        <name>2</name>
        <name>B</name>
        <sequence type="described" ref="VSP_041491 VSP_041493"/>
    </isoform>
    <isoform>
        <id>Q86WD7-3</id>
        <name>3</name>
        <name>SERPINA11a</name>
        <sequence type="described" ref="VSP_041492"/>
    </isoform>
    <isoform>
        <id>Q86WD7-4</id>
        <name>4</name>
        <name>SERPINA11b</name>
        <sequence type="described" ref="VSP_041490 VSP_041494 VSP_041495"/>
    </isoform>
    <isoform>
        <id>Q86WD7-5</id>
        <name>5</name>
        <sequence type="described" ref="VSP_041488"/>
    </isoform>
    <isoform>
        <id>Q86WD7-6</id>
        <name>6</name>
        <sequence type="described" ref="VSP_041489"/>
    </isoform>
    <isoform>
        <id>Q86WD7-7</id>
        <name>7</name>
        <sequence type="described" ref="VSP_041491"/>
    </isoform>
</comment>
<comment type="tissue specificity">
    <text evidence="2 4 5 6">Highly expressed in normal germinal center (GC) B-cells and GC B-cell-derived malignancies.</text>
</comment>
<comment type="miscellaneous">
    <molecule>Isoform 3</molecule>
    <text evidence="11">May be produced at very low levels due to a premature stop codon in the mRNA, leading to nonsense-mediated mRNA decay.</text>
</comment>
<comment type="similarity">
    <text evidence="11">Belongs to the serpin family.</text>
</comment>
<comment type="sequence caution" evidence="11">
    <conflict type="erroneous translation">
        <sequence resource="EMBL-CDS" id="AAO32345"/>
    </conflict>
    <text>Wrong choice of CDS.</text>
</comment>
<name>SPA9_HUMAN</name>
<accession>Q86WD7</accession>
<accession>B4DVH4</accession>
<accession>B9ZVX3</accession>
<accession>Q2T9J2</accession>
<accession>Q6UWP9</accession>
<accession>Q86WD4</accession>
<accession>Q86WD5</accession>
<accession>Q86WD6</accession>
<accession>Q86YP6</accession>
<accession>Q86YP7</accession>
<organism>
    <name type="scientific">Homo sapiens</name>
    <name type="common">Human</name>
    <dbReference type="NCBI Taxonomy" id="9606"/>
    <lineage>
        <taxon>Eukaryota</taxon>
        <taxon>Metazoa</taxon>
        <taxon>Chordata</taxon>
        <taxon>Craniata</taxon>
        <taxon>Vertebrata</taxon>
        <taxon>Euteleostomi</taxon>
        <taxon>Mammalia</taxon>
        <taxon>Eutheria</taxon>
        <taxon>Euarchontoglires</taxon>
        <taxon>Primates</taxon>
        <taxon>Haplorrhini</taxon>
        <taxon>Catarrhini</taxon>
        <taxon>Hominidae</taxon>
        <taxon>Homo</taxon>
    </lineage>
</organism>
<dbReference type="EMBL" id="AY220118">
    <property type="protein sequence ID" value="AAO65242.1"/>
    <property type="molecule type" value="mRNA"/>
</dbReference>
<dbReference type="EMBL" id="AY220119">
    <property type="protein sequence ID" value="AAO65243.1"/>
    <property type="molecule type" value="mRNA"/>
</dbReference>
<dbReference type="EMBL" id="AY220120">
    <property type="protein sequence ID" value="AAO65244.1"/>
    <property type="molecule type" value="mRNA"/>
</dbReference>
<dbReference type="EMBL" id="AY220121">
    <property type="protein sequence ID" value="AAO65245.1"/>
    <property type="molecule type" value="mRNA"/>
</dbReference>
<dbReference type="EMBL" id="AY185496">
    <property type="protein sequence ID" value="AAO32345.1"/>
    <property type="status" value="ALT_SEQ"/>
    <property type="molecule type" value="mRNA"/>
</dbReference>
<dbReference type="EMBL" id="AY185497">
    <property type="protein sequence ID" value="AAO32346.1"/>
    <property type="molecule type" value="mRNA"/>
</dbReference>
<dbReference type="EMBL" id="AY358700">
    <property type="protein sequence ID" value="AAQ89063.1"/>
    <property type="molecule type" value="mRNA"/>
</dbReference>
<dbReference type="EMBL" id="AK301082">
    <property type="protein sequence ID" value="BAG62686.1"/>
    <property type="molecule type" value="mRNA"/>
</dbReference>
<dbReference type="EMBL" id="AL132708">
    <property type="status" value="NOT_ANNOTATED_CDS"/>
    <property type="molecule type" value="Genomic_DNA"/>
</dbReference>
<dbReference type="EMBL" id="BC111498">
    <property type="protein sequence ID" value="AAI11499.1"/>
    <property type="molecule type" value="mRNA"/>
</dbReference>
<dbReference type="CCDS" id="CCDS41982.2">
    <molecule id="Q86WD7-1"/>
</dbReference>
<dbReference type="CCDS" id="CCDS61542.1">
    <molecule id="Q86WD7-5"/>
</dbReference>
<dbReference type="CCDS" id="CCDS91925.1">
    <molecule id="Q86WD7-6"/>
</dbReference>
<dbReference type="RefSeq" id="NP_001035983.1">
    <property type="nucleotide sequence ID" value="NM_001042518.1"/>
</dbReference>
<dbReference type="RefSeq" id="NP_001271204.2">
    <molecule id="Q86WD7-6"/>
    <property type="nucleotide sequence ID" value="NM_001284275.2"/>
</dbReference>
<dbReference type="RefSeq" id="NP_001271205.1">
    <molecule id="Q86WD7-5"/>
    <property type="nucleotide sequence ID" value="NM_001284276.2"/>
</dbReference>
<dbReference type="RefSeq" id="NP_783866.3">
    <molecule id="Q86WD7-1"/>
    <property type="nucleotide sequence ID" value="NM_175739.4"/>
</dbReference>
<dbReference type="RefSeq" id="XP_011535016.1">
    <molecule id="Q86WD7-1"/>
    <property type="nucleotide sequence ID" value="XM_011536714.3"/>
</dbReference>
<dbReference type="RefSeq" id="XP_011535017.1">
    <molecule id="Q86WD7-1"/>
    <property type="nucleotide sequence ID" value="XM_011536715.3"/>
</dbReference>
<dbReference type="RefSeq" id="XP_011535018.1">
    <molecule id="Q86WD7-6"/>
    <property type="nucleotide sequence ID" value="XM_011536716.3"/>
</dbReference>
<dbReference type="RefSeq" id="XP_011535019.1">
    <property type="nucleotide sequence ID" value="XM_011536717.1"/>
</dbReference>
<dbReference type="RefSeq" id="XP_047287295.1">
    <molecule id="Q86WD7-1"/>
    <property type="nucleotide sequence ID" value="XM_047431339.1"/>
</dbReference>
<dbReference type="RefSeq" id="XP_047287297.1">
    <molecule id="Q86WD7-6"/>
    <property type="nucleotide sequence ID" value="XM_047431341.1"/>
</dbReference>
<dbReference type="SMR" id="Q86WD7"/>
<dbReference type="BioGRID" id="130609">
    <property type="interactions" value="16"/>
</dbReference>
<dbReference type="FunCoup" id="Q86WD7">
    <property type="interactions" value="72"/>
</dbReference>
<dbReference type="IntAct" id="Q86WD7">
    <property type="interactions" value="7"/>
</dbReference>
<dbReference type="STRING" id="9606.ENSP00000337133"/>
<dbReference type="MEROPS" id="I04.082"/>
<dbReference type="GlyCosmos" id="Q86WD7">
    <property type="glycosylation" value="2 sites, No reported glycans"/>
</dbReference>
<dbReference type="GlyGen" id="Q86WD7">
    <property type="glycosylation" value="2 sites"/>
</dbReference>
<dbReference type="iPTMnet" id="Q86WD7"/>
<dbReference type="PhosphoSitePlus" id="Q86WD7"/>
<dbReference type="BioMuta" id="SERPINA9"/>
<dbReference type="DMDM" id="215274213"/>
<dbReference type="MassIVE" id="Q86WD7"/>
<dbReference type="PaxDb" id="9606-ENSP00000337133"/>
<dbReference type="PeptideAtlas" id="Q86WD7"/>
<dbReference type="ProteomicsDB" id="70147">
    <molecule id="Q86WD7-1"/>
</dbReference>
<dbReference type="ProteomicsDB" id="70148">
    <molecule id="Q86WD7-2"/>
</dbReference>
<dbReference type="ProteomicsDB" id="70149">
    <molecule id="Q86WD7-3"/>
</dbReference>
<dbReference type="ProteomicsDB" id="70150">
    <molecule id="Q86WD7-4"/>
</dbReference>
<dbReference type="ProteomicsDB" id="70151">
    <molecule id="Q86WD7-5"/>
</dbReference>
<dbReference type="ProteomicsDB" id="70152">
    <molecule id="Q86WD7-6"/>
</dbReference>
<dbReference type="ProteomicsDB" id="70153">
    <molecule id="Q86WD7-7"/>
</dbReference>
<dbReference type="Antibodypedia" id="56037">
    <property type="antibodies" value="152 antibodies from 25 providers"/>
</dbReference>
<dbReference type="DNASU" id="327657"/>
<dbReference type="Ensembl" id="ENST00000337425.10">
    <molecule id="Q86WD7-7"/>
    <property type="protein sequence ID" value="ENSP00000337133.5"/>
    <property type="gene ID" value="ENSG00000170054.16"/>
</dbReference>
<dbReference type="Ensembl" id="ENST00000380365.7">
    <molecule id="Q86WD7-1"/>
    <property type="protein sequence ID" value="ENSP00000369723.3"/>
    <property type="gene ID" value="ENSG00000170054.16"/>
</dbReference>
<dbReference type="Ensembl" id="ENST00000424550.6">
    <molecule id="Q86WD7-5"/>
    <property type="protein sequence ID" value="ENSP00000409012.2"/>
    <property type="gene ID" value="ENSG00000170054.16"/>
</dbReference>
<dbReference type="Ensembl" id="ENST00000448305.6">
    <molecule id="Q86WD7-6"/>
    <property type="protein sequence ID" value="ENSP00000414092.2"/>
    <property type="gene ID" value="ENSG00000170054.16"/>
</dbReference>
<dbReference type="Ensembl" id="ENST00000538527.5">
    <molecule id="Q86WD7-3"/>
    <property type="protein sequence ID" value="ENSP00000441511.1"/>
    <property type="gene ID" value="ENSG00000170054.16"/>
</dbReference>
<dbReference type="Ensembl" id="ENST00000674164.1">
    <molecule id="Q86WD7-2"/>
    <property type="protein sequence ID" value="ENSP00000501328.1"/>
    <property type="gene ID" value="ENSG00000170054.16"/>
</dbReference>
<dbReference type="Ensembl" id="ENST00000674397.2">
    <molecule id="Q86WD7-1"/>
    <property type="protein sequence ID" value="ENSP00000501517.1"/>
    <property type="gene ID" value="ENSG00000170054.16"/>
</dbReference>
<dbReference type="GeneID" id="327657"/>
<dbReference type="KEGG" id="hsa:327657"/>
<dbReference type="MANE-Select" id="ENST00000674397.2">
    <property type="protein sequence ID" value="ENSP00000501517.1"/>
    <property type="RefSeq nucleotide sequence ID" value="NM_175739.4"/>
    <property type="RefSeq protein sequence ID" value="NP_783866.3"/>
</dbReference>
<dbReference type="UCSC" id="uc001yde.4">
    <molecule id="Q86WD7-1"/>
    <property type="organism name" value="human"/>
</dbReference>
<dbReference type="AGR" id="HGNC:15995"/>
<dbReference type="CTD" id="327657"/>
<dbReference type="DisGeNET" id="327657"/>
<dbReference type="GeneCards" id="SERPINA9"/>
<dbReference type="HGNC" id="HGNC:15995">
    <property type="gene designation" value="SERPINA9"/>
</dbReference>
<dbReference type="HPA" id="ENSG00000170054">
    <property type="expression patterns" value="Tissue enriched (lymphoid)"/>
</dbReference>
<dbReference type="MalaCards" id="SERPINA9"/>
<dbReference type="MIM" id="615677">
    <property type="type" value="gene"/>
</dbReference>
<dbReference type="neXtProt" id="NX_Q86WD7"/>
<dbReference type="OpenTargets" id="ENSG00000170054"/>
<dbReference type="PharmGKB" id="PA38077"/>
<dbReference type="VEuPathDB" id="HostDB:ENSG00000170054"/>
<dbReference type="eggNOG" id="KOG2392">
    <property type="taxonomic scope" value="Eukaryota"/>
</dbReference>
<dbReference type="GeneTree" id="ENSGT00940000162880"/>
<dbReference type="HOGENOM" id="CLU_023330_2_1_1"/>
<dbReference type="InParanoid" id="Q86WD7"/>
<dbReference type="OMA" id="FNPADTH"/>
<dbReference type="OrthoDB" id="671595at2759"/>
<dbReference type="PAN-GO" id="Q86WD7">
    <property type="GO annotations" value="3 GO annotations based on evolutionary models"/>
</dbReference>
<dbReference type="PhylomeDB" id="Q86WD7"/>
<dbReference type="TreeFam" id="TF343201"/>
<dbReference type="PathwayCommons" id="Q86WD7"/>
<dbReference type="BioGRID-ORCS" id="327657">
    <property type="hits" value="8 hits in 1138 CRISPR screens"/>
</dbReference>
<dbReference type="ChiTaRS" id="SERPINA9">
    <property type="organism name" value="human"/>
</dbReference>
<dbReference type="GeneWiki" id="SERPINA9"/>
<dbReference type="GenomeRNAi" id="327657"/>
<dbReference type="Pharos" id="Q86WD7">
    <property type="development level" value="Tbio"/>
</dbReference>
<dbReference type="PRO" id="PR:Q86WD7"/>
<dbReference type="Proteomes" id="UP000005640">
    <property type="component" value="Chromosome 14"/>
</dbReference>
<dbReference type="RNAct" id="Q86WD7">
    <property type="molecule type" value="protein"/>
</dbReference>
<dbReference type="Bgee" id="ENSG00000170054">
    <property type="expression patterns" value="Expressed in epithelium of nasopharynx and 42 other cell types or tissues"/>
</dbReference>
<dbReference type="ExpressionAtlas" id="Q86WD7">
    <property type="expression patterns" value="baseline and differential"/>
</dbReference>
<dbReference type="GO" id="GO:0005737">
    <property type="term" value="C:cytoplasm"/>
    <property type="evidence" value="ECO:0007669"/>
    <property type="project" value="UniProtKB-SubCell"/>
</dbReference>
<dbReference type="GO" id="GO:0005615">
    <property type="term" value="C:extracellular space"/>
    <property type="evidence" value="ECO:0000318"/>
    <property type="project" value="GO_Central"/>
</dbReference>
<dbReference type="GO" id="GO:0016020">
    <property type="term" value="C:membrane"/>
    <property type="evidence" value="ECO:0007669"/>
    <property type="project" value="UniProtKB-SubCell"/>
</dbReference>
<dbReference type="GO" id="GO:0004867">
    <property type="term" value="F:serine-type endopeptidase inhibitor activity"/>
    <property type="evidence" value="ECO:0000314"/>
    <property type="project" value="UniProtKB"/>
</dbReference>
<dbReference type="CDD" id="cd19556">
    <property type="entry name" value="serpinA9_centerin"/>
    <property type="match status" value="1"/>
</dbReference>
<dbReference type="FunFam" id="2.30.39.10:FF:000003">
    <property type="entry name" value="alpha-1-antitrypsin isoform X1"/>
    <property type="match status" value="1"/>
</dbReference>
<dbReference type="FunFam" id="3.30.497.10:FF:000001">
    <property type="entry name" value="Serine protease inhibitor"/>
    <property type="match status" value="1"/>
</dbReference>
<dbReference type="FunFam" id="2.10.310.10:FF:000001">
    <property type="entry name" value="Serpin family A member 1"/>
    <property type="match status" value="1"/>
</dbReference>
<dbReference type="Gene3D" id="2.30.39.10">
    <property type="entry name" value="Alpha-1-antitrypsin, domain 1"/>
    <property type="match status" value="1"/>
</dbReference>
<dbReference type="Gene3D" id="3.30.497.10">
    <property type="entry name" value="Antithrombin, subunit I, domain 2"/>
    <property type="match status" value="1"/>
</dbReference>
<dbReference type="Gene3D" id="2.10.310.10">
    <property type="entry name" value="Serpins superfamily"/>
    <property type="match status" value="1"/>
</dbReference>
<dbReference type="InterPro" id="IPR023795">
    <property type="entry name" value="Serpin_CS"/>
</dbReference>
<dbReference type="InterPro" id="IPR023796">
    <property type="entry name" value="Serpin_dom"/>
</dbReference>
<dbReference type="InterPro" id="IPR000215">
    <property type="entry name" value="Serpin_fam"/>
</dbReference>
<dbReference type="InterPro" id="IPR036186">
    <property type="entry name" value="Serpin_sf"/>
</dbReference>
<dbReference type="InterPro" id="IPR042178">
    <property type="entry name" value="Serpin_sf_1"/>
</dbReference>
<dbReference type="InterPro" id="IPR042185">
    <property type="entry name" value="Serpin_sf_2"/>
</dbReference>
<dbReference type="PANTHER" id="PTHR11461">
    <property type="entry name" value="SERINE PROTEASE INHIBITOR, SERPIN"/>
    <property type="match status" value="1"/>
</dbReference>
<dbReference type="PANTHER" id="PTHR11461:SF40">
    <property type="entry name" value="SERPIN A9"/>
    <property type="match status" value="1"/>
</dbReference>
<dbReference type="Pfam" id="PF00079">
    <property type="entry name" value="Serpin"/>
    <property type="match status" value="1"/>
</dbReference>
<dbReference type="PRINTS" id="PR00780">
    <property type="entry name" value="LEUSERPINII"/>
</dbReference>
<dbReference type="SMART" id="SM00093">
    <property type="entry name" value="SERPIN"/>
    <property type="match status" value="1"/>
</dbReference>
<dbReference type="SUPFAM" id="SSF56574">
    <property type="entry name" value="Serpins"/>
    <property type="match status" value="1"/>
</dbReference>
<dbReference type="PROSITE" id="PS00284">
    <property type="entry name" value="SERPIN"/>
    <property type="match status" value="1"/>
</dbReference>
<proteinExistence type="evidence at protein level"/>
<feature type="signal peptide" evidence="1">
    <location>
        <begin position="1"/>
        <end position="23"/>
    </location>
</feature>
<feature type="chain" id="PRO_0000041971" description="Serpin A9">
    <location>
        <begin position="24"/>
        <end position="417"/>
    </location>
</feature>
<feature type="glycosylation site" description="N-linked (GlcNAc...) asparagine" evidence="1">
    <location>
        <position position="101"/>
    </location>
</feature>
<feature type="glycosylation site" description="N-linked (GlcNAc...) asparagine" evidence="1">
    <location>
        <position position="390"/>
    </location>
</feature>
<feature type="splice variant" id="VSP_041492" description="In isoform 3." evidence="10">
    <original>MASYLYGVLFAVGLCAPIYCVSPANAPSAYPRPSSTKSTPASQVYSLNTDFAFRLYRRLVLETPSQNIFFSPVSVSTSLAMLSLGAHSVTKTQILQGLGFNLTHTPESAIHQGFQHLVHSLTVPSKDLTLKMGSALFVKKELQLQANFLGNVKRLYEAEVFSTDFSNPSIAQARINSHVKKKTQGKVVDIIQGLDLLTAMVLVNHIFFKAKWEKPFHPEYTRKNFPFLVGEQVTVHVPMMHQKEQFAFGVDTELNCFVLQMDYKGDAVAFFVLPSKGKMRQLEQALSARTLRKWSHSLQKRWIEVFIPRFSISASYNLETILPKMGIQNVFDKNADFSGIAKRDSLQVSKATHKAVLDVSEEGTEATAATTTKFIVRSKDGPSYFTVSFNRTFLMMITNKATDGILFLGKVENPTKS</original>
    <variation>MRSAGGRGEIKVRRELQPSKQVSGLTNHARTGQEKRNLQRHILFQNGILPLWSTLCCWPLCSNLLCVPGQCPQCIPPPFLHKEHPCLTGVFPQHRLCLPPIPQAGFGDPESEHLLLPCECLHFPGHALPWGPLSHQDPDSPGPGLQPHTHTRVCHPPGLPAPGSLTDCSQQRPDLEDGKCPLRQEGAAAAGKFLGQCQEAV</variation>
    <location>
        <begin position="1"/>
        <end position="417"/>
    </location>
</feature>
<feature type="splice variant" id="VSP_041488" description="In isoform 5." evidence="7">
    <location>
        <begin position="1"/>
        <end position="131"/>
    </location>
</feature>
<feature type="splice variant" id="VSP_041489" description="In isoform 6." evidence="7">
    <location>
        <begin position="1"/>
        <end position="80"/>
    </location>
</feature>
<feature type="splice variant" id="VSP_041490" description="In isoform 4." evidence="10">
    <original>MASYLYGVLFAVGLCAPIYCVSPANAPSAYPRPSSTKSTPASQVYSLNTDFAFRLYR</original>
    <variation>MRSAGGRGEIKVRRELQPSKQVSGLTNHARTGQEKRNLQ</variation>
    <location>
        <begin position="1"/>
        <end position="57"/>
    </location>
</feature>
<feature type="splice variant" id="VSP_041491" description="In isoform 2 and isoform 7." evidence="7 8 9">
    <original>M</original>
    <variation>MQGQGRRRGTCKDIFCSKM</variation>
    <location>
        <position position="1"/>
    </location>
</feature>
<feature type="splice variant" id="VSP_041493" description="In isoform 2." evidence="7">
    <location>
        <begin position="73"/>
        <end position="172"/>
    </location>
</feature>
<feature type="splice variant" id="VSP_041494" description="In isoform 4." evidence="10">
    <original>AT</original>
    <variation>VS</variation>
    <location>
        <begin position="351"/>
        <end position="352"/>
    </location>
</feature>
<feature type="splice variant" id="VSP_041495" description="In isoform 4." evidence="10">
    <location>
        <begin position="353"/>
        <end position="417"/>
    </location>
</feature>
<feature type="sequence variant" id="VAR_047344" description="In dbSNP:rs4905204.">
    <original>A</original>
    <variation>V</variation>
    <location>
        <position position="24"/>
    </location>
</feature>
<feature type="sequence variant" id="VAR_047345" description="In dbSNP:rs17090921." evidence="3">
    <original>P</original>
    <variation>L</variation>
    <location>
        <position position="218"/>
    </location>
</feature>
<feature type="sequence variant" id="VAR_047346" description="In dbSNP:rs28583900." evidence="3">
    <original>H</original>
    <variation>Q</variation>
    <location>
        <position position="236"/>
    </location>
</feature>
<feature type="sequence variant" id="VAR_047347" description="In dbSNP:rs28618118." evidence="3">
    <original>R</original>
    <variation>I</variation>
    <location>
        <position position="292"/>
    </location>
</feature>
<feature type="sequence variant" id="VAR_047348" description="In dbSNP:rs11628722." evidence="2 3">
    <original>V</original>
    <variation>A</variation>
    <location>
        <position position="330"/>
    </location>
</feature>
<feature type="sequence conflict" description="In Ref. 1; AAO65242/AAO65243 and 3; AAQ89063." evidence="11" ref="1 3">
    <original>P</original>
    <variation>L</variation>
    <location>
        <position position="23"/>
    </location>
</feature>
<feature type="sequence conflict" description="In Ref. 4; BAG62686." evidence="11" ref="4">
    <original>Q</original>
    <variation>E</variation>
    <location>
        <position position="93"/>
    </location>
</feature>
<feature type="sequence conflict" description="In Ref. 1; AAO65245." evidence="11" ref="1">
    <original>R</original>
    <variation>G</variation>
    <location>
        <position position="174"/>
    </location>
</feature>
<feature type="sequence conflict" description="In Ref. 4; BAG62686." evidence="11" ref="4">
    <original>F</original>
    <variation>S</variation>
    <location>
        <position position="207"/>
    </location>
</feature>
<feature type="sequence conflict" description="In Ref. 1; AAO65242." evidence="11" ref="1">
    <original>N</original>
    <variation>D</variation>
    <location>
        <position position="224"/>
    </location>
</feature>
<feature type="sequence conflict" description="In Ref. 1; AAO65244." evidence="11" ref="1">
    <original>L</original>
    <variation>P</variation>
    <location>
        <position position="228"/>
    </location>
</feature>
<feature type="sequence conflict" description="In Ref. 1; AAO65242." evidence="11" ref="1">
    <original>T</original>
    <variation>A</variation>
    <location>
        <position position="371"/>
    </location>
</feature>
<feature type="sequence conflict" description="In Ref. 1; AAO65243 and 4; BAG62686." evidence="11" ref="1 4">
    <original>V</original>
    <variation>A</variation>
    <location>
        <position position="411"/>
    </location>
</feature>
<sequence>MASYLYGVLFAVGLCAPIYCVSPANAPSAYPRPSSTKSTPASQVYSLNTDFAFRLYRRLVLETPSQNIFFSPVSVSTSLAMLSLGAHSVTKTQILQGLGFNLTHTPESAIHQGFQHLVHSLTVPSKDLTLKMGSALFVKKELQLQANFLGNVKRLYEAEVFSTDFSNPSIAQARINSHVKKKTQGKVVDIIQGLDLLTAMVLVNHIFFKAKWEKPFHPEYTRKNFPFLVGEQVTVHVPMMHQKEQFAFGVDTELNCFVLQMDYKGDAVAFFVLPSKGKMRQLEQALSARTLRKWSHSLQKRWIEVFIPRFSISASYNLETILPKMGIQNVFDKNADFSGIAKRDSLQVSKATHKAVLDVSEEGTEATAATTTKFIVRSKDGPSYFTVSFNRTFLMMITNKATDGILFLGKVENPTKS</sequence>
<protein>
    <recommendedName>
        <fullName>Serpin A9</fullName>
    </recommendedName>
    <alternativeName>
        <fullName>Centerin</fullName>
    </alternativeName>
    <alternativeName>
        <fullName>Germinal center B-cell-expressed transcript 1 protein</fullName>
    </alternativeName>
</protein>
<reference key="1">
    <citation type="journal article" date="2003" name="Am. J. Pathol.">
        <title>Two newly characterized germinal center B-cell-associated genes, GCET1 and GCET2, have differential expression in normal and neoplastic B cells.</title>
        <authorList>
            <person name="Pan Z."/>
            <person name="Shen Y."/>
            <person name="Du C."/>
            <person name="Zhou G."/>
            <person name="Rosenwald A."/>
            <person name="Staudt L.M."/>
            <person name="Greiner T.C."/>
            <person name="McKeithan T.W."/>
            <person name="Chan W.C."/>
        </authorList>
    </citation>
    <scope>NUCLEOTIDE SEQUENCE [MRNA] (ISOFORMS 2; 5; 6 AND 7)</scope>
    <scope>VARIANT ALA-330</scope>
    <scope>TISSUE SPECIFICITY</scope>
</reference>
<reference key="2">
    <citation type="submission" date="2002-11" db="EMBL/GenBank/DDBJ databases">
        <authorList>
            <person name="Ju S.G."/>
            <person name="Zhang X.G."/>
        </authorList>
    </citation>
    <scope>NUCLEOTIDE SEQUENCE [MRNA] (ISOFORMS 3 AND 4)</scope>
    <source>
        <tissue>Blood</tissue>
    </source>
</reference>
<reference key="3">
    <citation type="journal article" date="2003" name="Genome Res.">
        <title>The secreted protein discovery initiative (SPDI), a large-scale effort to identify novel human secreted and transmembrane proteins: a bioinformatics assessment.</title>
        <authorList>
            <person name="Clark H.F."/>
            <person name="Gurney A.L."/>
            <person name="Abaya E."/>
            <person name="Baker K."/>
            <person name="Baldwin D.T."/>
            <person name="Brush J."/>
            <person name="Chen J."/>
            <person name="Chow B."/>
            <person name="Chui C."/>
            <person name="Crowley C."/>
            <person name="Currell B."/>
            <person name="Deuel B."/>
            <person name="Dowd P."/>
            <person name="Eaton D."/>
            <person name="Foster J.S."/>
            <person name="Grimaldi C."/>
            <person name="Gu Q."/>
            <person name="Hass P.E."/>
            <person name="Heldens S."/>
            <person name="Huang A."/>
            <person name="Kim H.S."/>
            <person name="Klimowski L."/>
            <person name="Jin Y."/>
            <person name="Johnson S."/>
            <person name="Lee J."/>
            <person name="Lewis L."/>
            <person name="Liao D."/>
            <person name="Mark M.R."/>
            <person name="Robbie E."/>
            <person name="Sanchez C."/>
            <person name="Schoenfeld J."/>
            <person name="Seshagiri S."/>
            <person name="Simmons L."/>
            <person name="Singh J."/>
            <person name="Smith V."/>
            <person name="Stinson J."/>
            <person name="Vagts A."/>
            <person name="Vandlen R.L."/>
            <person name="Watanabe C."/>
            <person name="Wieand D."/>
            <person name="Woods K."/>
            <person name="Xie M.-H."/>
            <person name="Yansura D.G."/>
            <person name="Yi S."/>
            <person name="Yu G."/>
            <person name="Yuan J."/>
            <person name="Zhang M."/>
            <person name="Zhang Z."/>
            <person name="Goddard A.D."/>
            <person name="Wood W.I."/>
            <person name="Godowski P.J."/>
            <person name="Gray A.M."/>
        </authorList>
    </citation>
    <scope>NUCLEOTIDE SEQUENCE [LARGE SCALE MRNA] (ISOFORM 1)</scope>
    <scope>VARIANTS LEU-218; GLN-236; ILE-292 AND ALA-330</scope>
</reference>
<reference key="4">
    <citation type="journal article" date="2004" name="Nat. Genet.">
        <title>Complete sequencing and characterization of 21,243 full-length human cDNAs.</title>
        <authorList>
            <person name="Ota T."/>
            <person name="Suzuki Y."/>
            <person name="Nishikawa T."/>
            <person name="Otsuki T."/>
            <person name="Sugiyama T."/>
            <person name="Irie R."/>
            <person name="Wakamatsu A."/>
            <person name="Hayashi K."/>
            <person name="Sato H."/>
            <person name="Nagai K."/>
            <person name="Kimura K."/>
            <person name="Makita H."/>
            <person name="Sekine M."/>
            <person name="Obayashi M."/>
            <person name="Nishi T."/>
            <person name="Shibahara T."/>
            <person name="Tanaka T."/>
            <person name="Ishii S."/>
            <person name="Yamamoto J."/>
            <person name="Saito K."/>
            <person name="Kawai Y."/>
            <person name="Isono Y."/>
            <person name="Nakamura Y."/>
            <person name="Nagahari K."/>
            <person name="Murakami K."/>
            <person name="Yasuda T."/>
            <person name="Iwayanagi T."/>
            <person name="Wagatsuma M."/>
            <person name="Shiratori A."/>
            <person name="Sudo H."/>
            <person name="Hosoiri T."/>
            <person name="Kaku Y."/>
            <person name="Kodaira H."/>
            <person name="Kondo H."/>
            <person name="Sugawara M."/>
            <person name="Takahashi M."/>
            <person name="Kanda K."/>
            <person name="Yokoi T."/>
            <person name="Furuya T."/>
            <person name="Kikkawa E."/>
            <person name="Omura Y."/>
            <person name="Abe K."/>
            <person name="Kamihara K."/>
            <person name="Katsuta N."/>
            <person name="Sato K."/>
            <person name="Tanikawa M."/>
            <person name="Yamazaki M."/>
            <person name="Ninomiya K."/>
            <person name="Ishibashi T."/>
            <person name="Yamashita H."/>
            <person name="Murakawa K."/>
            <person name="Fujimori K."/>
            <person name="Tanai H."/>
            <person name="Kimata M."/>
            <person name="Watanabe M."/>
            <person name="Hiraoka S."/>
            <person name="Chiba Y."/>
            <person name="Ishida S."/>
            <person name="Ono Y."/>
            <person name="Takiguchi S."/>
            <person name="Watanabe S."/>
            <person name="Yosida M."/>
            <person name="Hotuta T."/>
            <person name="Kusano J."/>
            <person name="Kanehori K."/>
            <person name="Takahashi-Fujii A."/>
            <person name="Hara H."/>
            <person name="Tanase T.-O."/>
            <person name="Nomura Y."/>
            <person name="Togiya S."/>
            <person name="Komai F."/>
            <person name="Hara R."/>
            <person name="Takeuchi K."/>
            <person name="Arita M."/>
            <person name="Imose N."/>
            <person name="Musashino K."/>
            <person name="Yuuki H."/>
            <person name="Oshima A."/>
            <person name="Sasaki N."/>
            <person name="Aotsuka S."/>
            <person name="Yoshikawa Y."/>
            <person name="Matsunawa H."/>
            <person name="Ichihara T."/>
            <person name="Shiohata N."/>
            <person name="Sano S."/>
            <person name="Moriya S."/>
            <person name="Momiyama H."/>
            <person name="Satoh N."/>
            <person name="Takami S."/>
            <person name="Terashima Y."/>
            <person name="Suzuki O."/>
            <person name="Nakagawa S."/>
            <person name="Senoh A."/>
            <person name="Mizoguchi H."/>
            <person name="Goto Y."/>
            <person name="Shimizu F."/>
            <person name="Wakebe H."/>
            <person name="Hishigaki H."/>
            <person name="Watanabe T."/>
            <person name="Sugiyama A."/>
            <person name="Takemoto M."/>
            <person name="Kawakami B."/>
            <person name="Yamazaki M."/>
            <person name="Watanabe K."/>
            <person name="Kumagai A."/>
            <person name="Itakura S."/>
            <person name="Fukuzumi Y."/>
            <person name="Fujimori Y."/>
            <person name="Komiyama M."/>
            <person name="Tashiro H."/>
            <person name="Tanigami A."/>
            <person name="Fujiwara T."/>
            <person name="Ono T."/>
            <person name="Yamada K."/>
            <person name="Fujii Y."/>
            <person name="Ozaki K."/>
            <person name="Hirao M."/>
            <person name="Ohmori Y."/>
            <person name="Kawabata A."/>
            <person name="Hikiji T."/>
            <person name="Kobatake N."/>
            <person name="Inagaki H."/>
            <person name="Ikema Y."/>
            <person name="Okamoto S."/>
            <person name="Okitani R."/>
            <person name="Kawakami T."/>
            <person name="Noguchi S."/>
            <person name="Itoh T."/>
            <person name="Shigeta K."/>
            <person name="Senba T."/>
            <person name="Matsumura K."/>
            <person name="Nakajima Y."/>
            <person name="Mizuno T."/>
            <person name="Morinaga M."/>
            <person name="Sasaki M."/>
            <person name="Togashi T."/>
            <person name="Oyama M."/>
            <person name="Hata H."/>
            <person name="Watanabe M."/>
            <person name="Komatsu T."/>
            <person name="Mizushima-Sugano J."/>
            <person name="Satoh T."/>
            <person name="Shirai Y."/>
            <person name="Takahashi Y."/>
            <person name="Nakagawa K."/>
            <person name="Okumura K."/>
            <person name="Nagase T."/>
            <person name="Nomura N."/>
            <person name="Kikuchi H."/>
            <person name="Masuho Y."/>
            <person name="Yamashita R."/>
            <person name="Nakai K."/>
            <person name="Yada T."/>
            <person name="Nakamura Y."/>
            <person name="Ohara O."/>
            <person name="Isogai T."/>
            <person name="Sugano S."/>
        </authorList>
    </citation>
    <scope>NUCLEOTIDE SEQUENCE [LARGE SCALE MRNA] (ISOFORM 7)</scope>
    <source>
        <tissue>Spleen</tissue>
    </source>
</reference>
<reference key="5">
    <citation type="journal article" date="2003" name="Nature">
        <title>The DNA sequence and analysis of human chromosome 14.</title>
        <authorList>
            <person name="Heilig R."/>
            <person name="Eckenberg R."/>
            <person name="Petit J.-L."/>
            <person name="Fonknechten N."/>
            <person name="Da Silva C."/>
            <person name="Cattolico L."/>
            <person name="Levy M."/>
            <person name="Barbe V."/>
            <person name="De Berardinis V."/>
            <person name="Ureta-Vidal A."/>
            <person name="Pelletier E."/>
            <person name="Vico V."/>
            <person name="Anthouard V."/>
            <person name="Rowen L."/>
            <person name="Madan A."/>
            <person name="Qin S."/>
            <person name="Sun H."/>
            <person name="Du H."/>
            <person name="Pepin K."/>
            <person name="Artiguenave F."/>
            <person name="Robert C."/>
            <person name="Cruaud C."/>
            <person name="Bruels T."/>
            <person name="Jaillon O."/>
            <person name="Friedlander L."/>
            <person name="Samson G."/>
            <person name="Brottier P."/>
            <person name="Cure S."/>
            <person name="Segurens B."/>
            <person name="Aniere F."/>
            <person name="Samain S."/>
            <person name="Crespeau H."/>
            <person name="Abbasi N."/>
            <person name="Aiach N."/>
            <person name="Boscus D."/>
            <person name="Dickhoff R."/>
            <person name="Dors M."/>
            <person name="Dubois I."/>
            <person name="Friedman C."/>
            <person name="Gouyvenoux M."/>
            <person name="James R."/>
            <person name="Madan A."/>
            <person name="Mairey-Estrada B."/>
            <person name="Mangenot S."/>
            <person name="Martins N."/>
            <person name="Menard M."/>
            <person name="Oztas S."/>
            <person name="Ratcliffe A."/>
            <person name="Shaffer T."/>
            <person name="Trask B."/>
            <person name="Vacherie B."/>
            <person name="Bellemere C."/>
            <person name="Belser C."/>
            <person name="Besnard-Gonnet M."/>
            <person name="Bartol-Mavel D."/>
            <person name="Boutard M."/>
            <person name="Briez-Silla S."/>
            <person name="Combette S."/>
            <person name="Dufosse-Laurent V."/>
            <person name="Ferron C."/>
            <person name="Lechaplais C."/>
            <person name="Louesse C."/>
            <person name="Muselet D."/>
            <person name="Magdelenat G."/>
            <person name="Pateau E."/>
            <person name="Petit E."/>
            <person name="Sirvain-Trukniewicz P."/>
            <person name="Trybou A."/>
            <person name="Vega-Czarny N."/>
            <person name="Bataille E."/>
            <person name="Bluet E."/>
            <person name="Bordelais I."/>
            <person name="Dubois M."/>
            <person name="Dumont C."/>
            <person name="Guerin T."/>
            <person name="Haffray S."/>
            <person name="Hammadi R."/>
            <person name="Muanga J."/>
            <person name="Pellouin V."/>
            <person name="Robert D."/>
            <person name="Wunderle E."/>
            <person name="Gauguet G."/>
            <person name="Roy A."/>
            <person name="Sainte-Marthe L."/>
            <person name="Verdier J."/>
            <person name="Verdier-Discala C."/>
            <person name="Hillier L.W."/>
            <person name="Fulton L."/>
            <person name="McPherson J."/>
            <person name="Matsuda F."/>
            <person name="Wilson R."/>
            <person name="Scarpelli C."/>
            <person name="Gyapay G."/>
            <person name="Wincker P."/>
            <person name="Saurin W."/>
            <person name="Quetier F."/>
            <person name="Waterston R."/>
            <person name="Hood L."/>
            <person name="Weissenbach J."/>
        </authorList>
    </citation>
    <scope>NUCLEOTIDE SEQUENCE [LARGE SCALE GENOMIC DNA]</scope>
</reference>
<reference key="6">
    <citation type="journal article" date="2004" name="Genome Res.">
        <title>The status, quality, and expansion of the NIH full-length cDNA project: the Mammalian Gene Collection (MGC).</title>
        <authorList>
            <consortium name="The MGC Project Team"/>
        </authorList>
    </citation>
    <scope>NUCLEOTIDE SEQUENCE [LARGE SCALE MRNA] (ISOFORM 7)</scope>
    <source>
        <tissue>Lymph</tissue>
    </source>
</reference>
<reference key="7">
    <citation type="journal article" date="2007" name="Biochem. J.">
        <title>Molecular characterization of centerin, a germinal centre cell serpin.</title>
        <authorList>
            <person name="Paterson M.A."/>
            <person name="Horvath A.J."/>
            <person name="Pike R.N."/>
            <person name="Coughlin P.B."/>
        </authorList>
    </citation>
    <scope>FUNCTION</scope>
    <scope>IDENTIFICATION BY MASS SPECTROMETRY</scope>
    <scope>TISSUE SPECIFICITY</scope>
</reference>
<reference key="8">
    <citation type="journal article" date="2008" name="Am. J. Clin. Pathol.">
        <title>Expression of the serpin centerin defines a germinal center phenotype in B-cell lymphomas.</title>
        <authorList>
            <person name="Paterson M.A."/>
            <person name="Hosking P.S."/>
            <person name="Coughlin P.B."/>
        </authorList>
    </citation>
    <scope>TISSUE SPECIFICITY</scope>
    <scope>SUBCELLULAR LOCATION</scope>
</reference>
<reference key="9">
    <citation type="journal article" date="2008" name="Blood">
        <title>Gcet1 (centerin), a highly restricted marker for a subset of germinal center-derived lymphomas.</title>
        <authorList>
            <person name="Montes-Moreno S."/>
            <person name="Roncador G."/>
            <person name="Maestre L."/>
            <person name="Martinez N."/>
            <person name="Sanchez-Verde L."/>
            <person name="Camacho F.I."/>
            <person name="Cannata J."/>
            <person name="Martinez-Torrecuadrada J.L."/>
            <person name="Shen Y."/>
            <person name="Chan W.C."/>
            <person name="Piris M.A."/>
        </authorList>
    </citation>
    <scope>TISSUE SPECIFICITY</scope>
    <scope>SUBCELLULAR LOCATION</scope>
</reference>